<dbReference type="EMBL" id="AK173018">
    <property type="protein sequence ID" value="BAD32296.1"/>
    <property type="status" value="ALT_INIT"/>
    <property type="molecule type" value="mRNA"/>
</dbReference>
<dbReference type="EMBL" id="BX119911">
    <property type="status" value="NOT_ANNOTATED_CDS"/>
    <property type="molecule type" value="Genomic_DNA"/>
</dbReference>
<dbReference type="EMBL" id="BC043106">
    <property type="protein sequence ID" value="AAH43106.1"/>
    <property type="molecule type" value="mRNA"/>
</dbReference>
<dbReference type="EMBL" id="AK016946">
    <property type="protein sequence ID" value="BAB30514.1"/>
    <property type="molecule type" value="mRNA"/>
</dbReference>
<dbReference type="CCDS" id="CCDS24979.1"/>
<dbReference type="RefSeq" id="NP_083239.1">
    <property type="nucleotide sequence ID" value="NM_028963.2"/>
</dbReference>
<dbReference type="RefSeq" id="XP_006534430.1">
    <property type="nucleotide sequence ID" value="XM_006534367.2"/>
</dbReference>
<dbReference type="RefSeq" id="XP_006534431.1">
    <property type="nucleotide sequence ID" value="XM_006534368.3"/>
</dbReference>
<dbReference type="RefSeq" id="XP_006534432.1">
    <property type="nucleotide sequence ID" value="XM_006534369.3"/>
</dbReference>
<dbReference type="RefSeq" id="XP_006534433.1">
    <property type="nucleotide sequence ID" value="XM_006534370.3"/>
</dbReference>
<dbReference type="RefSeq" id="XP_006534435.1">
    <property type="nucleotide sequence ID" value="XM_006534372.3"/>
</dbReference>
<dbReference type="RefSeq" id="XP_017170302.1">
    <property type="nucleotide sequence ID" value="XM_017314813.1"/>
</dbReference>
<dbReference type="SMR" id="Q6A000"/>
<dbReference type="FunCoup" id="Q6A000">
    <property type="interactions" value="1147"/>
</dbReference>
<dbReference type="STRING" id="10090.ENSMUSP00000104146"/>
<dbReference type="GlyGen" id="Q6A000">
    <property type="glycosylation" value="1 site, 1 O-linked glycan (1 site)"/>
</dbReference>
<dbReference type="iPTMnet" id="Q6A000"/>
<dbReference type="PhosphoSitePlus" id="Q6A000"/>
<dbReference type="jPOST" id="Q6A000"/>
<dbReference type="PaxDb" id="10090-ENSMUSP00000104146"/>
<dbReference type="ProteomicsDB" id="295581"/>
<dbReference type="DNASU" id="74477"/>
<dbReference type="GeneID" id="74477"/>
<dbReference type="KEGG" id="mmu:74477"/>
<dbReference type="UCSC" id="uc007jyd.1">
    <property type="organism name" value="mouse"/>
</dbReference>
<dbReference type="AGR" id="MGI:1921727"/>
<dbReference type="MGI" id="MGI:1921727">
    <property type="gene designation" value="4933427D14Rik"/>
</dbReference>
<dbReference type="eggNOG" id="ENOG502QQYJ">
    <property type="taxonomic scope" value="Eukaryota"/>
</dbReference>
<dbReference type="InParanoid" id="Q6A000"/>
<dbReference type="OrthoDB" id="10072648at2759"/>
<dbReference type="PhylomeDB" id="Q6A000"/>
<dbReference type="TreeFam" id="TF331402"/>
<dbReference type="BioGRID-ORCS" id="74477">
    <property type="hits" value="4 hits in 77 CRISPR screens"/>
</dbReference>
<dbReference type="ChiTaRS" id="4933427D14Rik">
    <property type="organism name" value="mouse"/>
</dbReference>
<dbReference type="PRO" id="PR:Q6A000"/>
<dbReference type="Proteomes" id="UP000000589">
    <property type="component" value="Unplaced"/>
</dbReference>
<dbReference type="RNAct" id="Q6A000">
    <property type="molecule type" value="protein"/>
</dbReference>
<dbReference type="GO" id="GO:0034451">
    <property type="term" value="C:centriolar satellite"/>
    <property type="evidence" value="ECO:0007669"/>
    <property type="project" value="UniProtKB-SubCell"/>
</dbReference>
<dbReference type="GO" id="GO:0005737">
    <property type="term" value="C:cytoplasm"/>
    <property type="evidence" value="ECO:0007669"/>
    <property type="project" value="UniProtKB-KW"/>
</dbReference>
<dbReference type="GO" id="GO:0007099">
    <property type="term" value="P:centriole replication"/>
    <property type="evidence" value="ECO:0007669"/>
    <property type="project" value="InterPro"/>
</dbReference>
<dbReference type="GO" id="GO:0060271">
    <property type="term" value="P:cilium assembly"/>
    <property type="evidence" value="ECO:0000250"/>
    <property type="project" value="UniProtKB"/>
</dbReference>
<dbReference type="GO" id="GO:0061824">
    <property type="term" value="P:cytosolic ciliogenesis"/>
    <property type="evidence" value="ECO:0000250"/>
    <property type="project" value="UniProtKB"/>
</dbReference>
<dbReference type="InterPro" id="IPR031447">
    <property type="entry name" value="MNR"/>
</dbReference>
<dbReference type="PANTHER" id="PTHR15732">
    <property type="entry name" value="PROTEIN MOONRAKER"/>
    <property type="match status" value="1"/>
</dbReference>
<dbReference type="PANTHER" id="PTHR15732:SF4">
    <property type="entry name" value="PROTEIN MOONRAKER"/>
    <property type="match status" value="1"/>
</dbReference>
<dbReference type="Pfam" id="PF15718">
    <property type="entry name" value="MNR"/>
    <property type="match status" value="1"/>
</dbReference>
<protein>
    <recommendedName>
        <fullName evidence="1">Protein moonraker</fullName>
        <shortName evidence="1">MNR</shortName>
    </recommendedName>
</protein>
<proteinExistence type="evidence at protein level"/>
<reference key="1">
    <citation type="journal article" date="2004" name="DNA Res.">
        <title>Prediction of the coding sequences of mouse homologues of KIAA gene: IV. The complete nucleotide sequences of 500 mouse KIAA-homologous cDNAs identified by screening of terminal sequences of cDNA clones randomly sampled from size-fractionated libraries.</title>
        <authorList>
            <person name="Okazaki N."/>
            <person name="Kikuno R."/>
            <person name="Ohara R."/>
            <person name="Inamoto S."/>
            <person name="Koseki H."/>
            <person name="Hiraoka S."/>
            <person name="Saga Y."/>
            <person name="Seino S."/>
            <person name="Nishimura M."/>
            <person name="Kaisho T."/>
            <person name="Hoshino K."/>
            <person name="Kitamura H."/>
            <person name="Nagase T."/>
            <person name="Ohara O."/>
            <person name="Koga H."/>
        </authorList>
    </citation>
    <scope>NUCLEOTIDE SEQUENCE [LARGE SCALE MRNA]</scope>
    <source>
        <tissue>Fetal brain</tissue>
    </source>
</reference>
<reference key="2">
    <citation type="journal article" date="2009" name="PLoS Biol.">
        <title>Lineage-specific biology revealed by a finished genome assembly of the mouse.</title>
        <authorList>
            <person name="Church D.M."/>
            <person name="Goodstadt L."/>
            <person name="Hillier L.W."/>
            <person name="Zody M.C."/>
            <person name="Goldstein S."/>
            <person name="She X."/>
            <person name="Bult C.J."/>
            <person name="Agarwala R."/>
            <person name="Cherry J.L."/>
            <person name="DiCuccio M."/>
            <person name="Hlavina W."/>
            <person name="Kapustin Y."/>
            <person name="Meric P."/>
            <person name="Maglott D."/>
            <person name="Birtle Z."/>
            <person name="Marques A.C."/>
            <person name="Graves T."/>
            <person name="Zhou S."/>
            <person name="Teague B."/>
            <person name="Potamousis K."/>
            <person name="Churas C."/>
            <person name="Place M."/>
            <person name="Herschleb J."/>
            <person name="Runnheim R."/>
            <person name="Forrest D."/>
            <person name="Amos-Landgraf J."/>
            <person name="Schwartz D.C."/>
            <person name="Cheng Z."/>
            <person name="Lindblad-Toh K."/>
            <person name="Eichler E.E."/>
            <person name="Ponting C.P."/>
        </authorList>
    </citation>
    <scope>NUCLEOTIDE SEQUENCE [LARGE SCALE GENOMIC DNA]</scope>
    <source>
        <strain>C57BL/6J</strain>
    </source>
</reference>
<reference key="3">
    <citation type="journal article" date="2004" name="Genome Res.">
        <title>The status, quality, and expansion of the NIH full-length cDNA project: the Mammalian Gene Collection (MGC).</title>
        <authorList>
            <consortium name="The MGC Project Team"/>
        </authorList>
    </citation>
    <scope>NUCLEOTIDE SEQUENCE [LARGE SCALE MRNA]</scope>
    <source>
        <strain>C57BL/6J</strain>
        <tissue>Brain</tissue>
    </source>
</reference>
<reference key="4">
    <citation type="journal article" date="2005" name="Science">
        <title>The transcriptional landscape of the mammalian genome.</title>
        <authorList>
            <person name="Carninci P."/>
            <person name="Kasukawa T."/>
            <person name="Katayama S."/>
            <person name="Gough J."/>
            <person name="Frith M.C."/>
            <person name="Maeda N."/>
            <person name="Oyama R."/>
            <person name="Ravasi T."/>
            <person name="Lenhard B."/>
            <person name="Wells C."/>
            <person name="Kodzius R."/>
            <person name="Shimokawa K."/>
            <person name="Bajic V.B."/>
            <person name="Brenner S.E."/>
            <person name="Batalov S."/>
            <person name="Forrest A.R."/>
            <person name="Zavolan M."/>
            <person name="Davis M.J."/>
            <person name="Wilming L.G."/>
            <person name="Aidinis V."/>
            <person name="Allen J.E."/>
            <person name="Ambesi-Impiombato A."/>
            <person name="Apweiler R."/>
            <person name="Aturaliya R.N."/>
            <person name="Bailey T.L."/>
            <person name="Bansal M."/>
            <person name="Baxter L."/>
            <person name="Beisel K.W."/>
            <person name="Bersano T."/>
            <person name="Bono H."/>
            <person name="Chalk A.M."/>
            <person name="Chiu K.P."/>
            <person name="Choudhary V."/>
            <person name="Christoffels A."/>
            <person name="Clutterbuck D.R."/>
            <person name="Crowe M.L."/>
            <person name="Dalla E."/>
            <person name="Dalrymple B.P."/>
            <person name="de Bono B."/>
            <person name="Della Gatta G."/>
            <person name="di Bernardo D."/>
            <person name="Down T."/>
            <person name="Engstrom P."/>
            <person name="Fagiolini M."/>
            <person name="Faulkner G."/>
            <person name="Fletcher C.F."/>
            <person name="Fukushima T."/>
            <person name="Furuno M."/>
            <person name="Futaki S."/>
            <person name="Gariboldi M."/>
            <person name="Georgii-Hemming P."/>
            <person name="Gingeras T.R."/>
            <person name="Gojobori T."/>
            <person name="Green R.E."/>
            <person name="Gustincich S."/>
            <person name="Harbers M."/>
            <person name="Hayashi Y."/>
            <person name="Hensch T.K."/>
            <person name="Hirokawa N."/>
            <person name="Hill D."/>
            <person name="Huminiecki L."/>
            <person name="Iacono M."/>
            <person name="Ikeo K."/>
            <person name="Iwama A."/>
            <person name="Ishikawa T."/>
            <person name="Jakt M."/>
            <person name="Kanapin A."/>
            <person name="Katoh M."/>
            <person name="Kawasawa Y."/>
            <person name="Kelso J."/>
            <person name="Kitamura H."/>
            <person name="Kitano H."/>
            <person name="Kollias G."/>
            <person name="Krishnan S.P."/>
            <person name="Kruger A."/>
            <person name="Kummerfeld S.K."/>
            <person name="Kurochkin I.V."/>
            <person name="Lareau L.F."/>
            <person name="Lazarevic D."/>
            <person name="Lipovich L."/>
            <person name="Liu J."/>
            <person name="Liuni S."/>
            <person name="McWilliam S."/>
            <person name="Madan Babu M."/>
            <person name="Madera M."/>
            <person name="Marchionni L."/>
            <person name="Matsuda H."/>
            <person name="Matsuzawa S."/>
            <person name="Miki H."/>
            <person name="Mignone F."/>
            <person name="Miyake S."/>
            <person name="Morris K."/>
            <person name="Mottagui-Tabar S."/>
            <person name="Mulder N."/>
            <person name="Nakano N."/>
            <person name="Nakauchi H."/>
            <person name="Ng P."/>
            <person name="Nilsson R."/>
            <person name="Nishiguchi S."/>
            <person name="Nishikawa S."/>
            <person name="Nori F."/>
            <person name="Ohara O."/>
            <person name="Okazaki Y."/>
            <person name="Orlando V."/>
            <person name="Pang K.C."/>
            <person name="Pavan W.J."/>
            <person name="Pavesi G."/>
            <person name="Pesole G."/>
            <person name="Petrovsky N."/>
            <person name="Piazza S."/>
            <person name="Reed J."/>
            <person name="Reid J.F."/>
            <person name="Ring B.Z."/>
            <person name="Ringwald M."/>
            <person name="Rost B."/>
            <person name="Ruan Y."/>
            <person name="Salzberg S.L."/>
            <person name="Sandelin A."/>
            <person name="Schneider C."/>
            <person name="Schoenbach C."/>
            <person name="Sekiguchi K."/>
            <person name="Semple C.A."/>
            <person name="Seno S."/>
            <person name="Sessa L."/>
            <person name="Sheng Y."/>
            <person name="Shibata Y."/>
            <person name="Shimada H."/>
            <person name="Shimada K."/>
            <person name="Silva D."/>
            <person name="Sinclair B."/>
            <person name="Sperling S."/>
            <person name="Stupka E."/>
            <person name="Sugiura K."/>
            <person name="Sultana R."/>
            <person name="Takenaka Y."/>
            <person name="Taki K."/>
            <person name="Tammoja K."/>
            <person name="Tan S.L."/>
            <person name="Tang S."/>
            <person name="Taylor M.S."/>
            <person name="Tegner J."/>
            <person name="Teichmann S.A."/>
            <person name="Ueda H.R."/>
            <person name="van Nimwegen E."/>
            <person name="Verardo R."/>
            <person name="Wei C.L."/>
            <person name="Yagi K."/>
            <person name="Yamanishi H."/>
            <person name="Zabarovsky E."/>
            <person name="Zhu S."/>
            <person name="Zimmer A."/>
            <person name="Hide W."/>
            <person name="Bult C."/>
            <person name="Grimmond S.M."/>
            <person name="Teasdale R.D."/>
            <person name="Liu E.T."/>
            <person name="Brusic V."/>
            <person name="Quackenbush J."/>
            <person name="Wahlestedt C."/>
            <person name="Mattick J.S."/>
            <person name="Hume D.A."/>
            <person name="Kai C."/>
            <person name="Sasaki D."/>
            <person name="Tomaru Y."/>
            <person name="Fukuda S."/>
            <person name="Kanamori-Katayama M."/>
            <person name="Suzuki M."/>
            <person name="Aoki J."/>
            <person name="Arakawa T."/>
            <person name="Iida J."/>
            <person name="Imamura K."/>
            <person name="Itoh M."/>
            <person name="Kato T."/>
            <person name="Kawaji H."/>
            <person name="Kawagashira N."/>
            <person name="Kawashima T."/>
            <person name="Kojima M."/>
            <person name="Kondo S."/>
            <person name="Konno H."/>
            <person name="Nakano K."/>
            <person name="Ninomiya N."/>
            <person name="Nishio T."/>
            <person name="Okada M."/>
            <person name="Plessy C."/>
            <person name="Shibata K."/>
            <person name="Shiraki T."/>
            <person name="Suzuki S."/>
            <person name="Tagami M."/>
            <person name="Waki K."/>
            <person name="Watahiki A."/>
            <person name="Okamura-Oho Y."/>
            <person name="Suzuki H."/>
            <person name="Kawai J."/>
            <person name="Hayashizaki Y."/>
        </authorList>
    </citation>
    <scope>NUCLEOTIDE SEQUENCE [LARGE SCALE MRNA] OF 1-624</scope>
    <source>
        <strain>C57BL/6J</strain>
        <tissue>Testis</tissue>
    </source>
</reference>
<reference key="5">
    <citation type="journal article" date="2016" name="Hum. Mol. Genet.">
        <title>OFIP/KIAA0753 forms a complex with OFD1 and FOR20 at pericentriolar satellites and centrosomes and is mutated in one individual with oral-facial-digital syndrome.</title>
        <authorList>
            <person name="Chevrier V."/>
            <person name="Bruel A.L."/>
            <person name="Van Dam T.J."/>
            <person name="Franco B."/>
            <person name="Lo Scalzo M."/>
            <person name="Lembo F."/>
            <person name="Audebert S."/>
            <person name="Baudelet E."/>
            <person name="Isnardon D."/>
            <person name="Bole A."/>
            <person name="Borg J.P."/>
            <person name="Kuentz P."/>
            <person name="Thevenon J."/>
            <person name="Burglen L."/>
            <person name="Faivre L."/>
            <person name="Riviere J.B."/>
            <person name="Huynen M.A."/>
            <person name="Birnbaum D."/>
            <person name="Rosnet O."/>
            <person name="Thauvin-Robinet C."/>
        </authorList>
    </citation>
    <scope>INTERACTION WITH CEP20; OFD1 AND PCM1</scope>
</reference>
<keyword id="KW-0175">Coiled coil</keyword>
<keyword id="KW-0963">Cytoplasm</keyword>
<keyword id="KW-0206">Cytoskeleton</keyword>
<keyword id="KW-0597">Phosphoprotein</keyword>
<keyword id="KW-1185">Reference proteome</keyword>
<name>MOONR_MOUSE</name>
<gene>
    <name type="primary">Kiaa0753</name>
    <name evidence="1" type="synonym">Mnr</name>
</gene>
<sequence length="959" mass="108875">MGPSQPASTCVHLAPSLQLDAMSDPRNLQPQNQLQFNRNVPTNPRNLAVRYSCPHGIKIEKLKHSYNELNHGKDLDFKAGNELSSSVSFSVISEERLSYAVHLAKRDVKRRQFEEHVKDHLRSLPHSSHKGMHTKVERKDSKSQDVCHCSHQPSRVSLSSSGAKVYVYTSQPGRSDLTVPNSPPTHDPGLQLQPRIEENKNLWEQKGLLEVQRLQKELSGCIRKIEALTKKDRLEEALDPDEEHRIRVRRQEQAVRCARMLYVLQQQVKEIQEELDKLSPQKIKHTKKSWAVSRLAAAHRAAIRALQVFVTQFTDRGEHPVPARCRELGSLIRQLSLCSAKLDADPSVPDVVIDILQQIEALESLLEKKLSPKKAKKCFTEIRSRFPVGSQKILERWPTVLPKSERRHLVTKETFPQETSRPPVAKRLLAAMCQPDGELQRLESEPDVLDAHLLPEEAPRIEDNGTDFKDGTLTPAKPQAVRRKALTGSMPIRKKDTVESARPQQGLHIAERNRPNQPYSKSRLQQTTVSSRLKMNRQPMKDHRAPWIPPNPTSPPASPKCAAWMKVKYSPRDAAKEQSLQQEDIHKESQLRGDAEQEAARLSWPDAESSKRLKELEELEAKEMERKQKQRLNWLEAETSRRTKELDELKAEEMDRLQKLSVSATQLADKVEEAVLERLKPLLIKAQRVNSSVEANSHLKDRPSRHAAAAAQPAEQASDVPFESRNIPQLRDCLEDTAHELWARTQDKILGSETSARLGDSKDSPDLETMMLRMEEMEKYQETVRQRYNKIVYADPHLWMHEERNDQNTPAVSEGPLASHPIKITKTATQKCPAVNILLERPCNANSLDESVTTEEGSEKREAPLPLSREDLHQRKGQTPLSVPPRMRHSIGAYCSRFEQFLRIIAHEAIGSFNPWLIAESFSDELVDEALGAVAAELQDVCEDYAEAVFTSEFLEAAA</sequence>
<feature type="chain" id="PRO_0000280110" description="Protein moonraker">
    <location>
        <begin position="1"/>
        <end position="959"/>
    </location>
</feature>
<feature type="region of interest" description="Disordered" evidence="3">
    <location>
        <begin position="124"/>
        <end position="156"/>
    </location>
</feature>
<feature type="region of interest" description="Disordered" evidence="3">
    <location>
        <begin position="456"/>
        <end position="560"/>
    </location>
</feature>
<feature type="region of interest" description="Disordered" evidence="3">
    <location>
        <begin position="572"/>
        <end position="610"/>
    </location>
</feature>
<feature type="region of interest" description="Disordered" evidence="3">
    <location>
        <begin position="692"/>
        <end position="721"/>
    </location>
</feature>
<feature type="region of interest" description="Disordered" evidence="3">
    <location>
        <begin position="848"/>
        <end position="883"/>
    </location>
</feature>
<feature type="region of interest" description="Necessary and sufficient for CEP20-binding" evidence="1">
    <location>
        <begin position="877"/>
        <end position="959"/>
    </location>
</feature>
<feature type="coiled-coil region" evidence="2">
    <location>
        <begin position="582"/>
        <end position="674"/>
    </location>
</feature>
<feature type="compositionally biased region" description="Basic and acidic residues" evidence="3">
    <location>
        <begin position="134"/>
        <end position="145"/>
    </location>
</feature>
<feature type="compositionally biased region" description="Basic and acidic residues" evidence="3">
    <location>
        <begin position="456"/>
        <end position="470"/>
    </location>
</feature>
<feature type="compositionally biased region" description="Polar residues" evidence="3">
    <location>
        <begin position="515"/>
        <end position="533"/>
    </location>
</feature>
<feature type="compositionally biased region" description="Pro residues" evidence="3">
    <location>
        <begin position="547"/>
        <end position="558"/>
    </location>
</feature>
<feature type="compositionally biased region" description="Basic and acidic residues" evidence="3">
    <location>
        <begin position="583"/>
        <end position="599"/>
    </location>
</feature>
<feature type="compositionally biased region" description="Low complexity" evidence="3">
    <location>
        <begin position="707"/>
        <end position="717"/>
    </location>
</feature>
<feature type="compositionally biased region" description="Basic and acidic residues" evidence="3">
    <location>
        <begin position="857"/>
        <end position="874"/>
    </location>
</feature>
<feature type="modified residue" description="Phosphoserine" evidence="1">
    <location>
        <position position="279"/>
    </location>
</feature>
<feature type="modified residue" description="Phosphoserine" evidence="1">
    <location>
        <position position="691"/>
    </location>
</feature>
<feature type="sequence conflict" description="In Ref. 4; BAB30514." evidence="5" ref="4">
    <original>R</original>
    <variation>S</variation>
    <location>
        <position position="45"/>
    </location>
</feature>
<feature type="sequence conflict" description="In Ref. 4; BAB30514." evidence="5" ref="4">
    <original>S</original>
    <variation>A</variation>
    <location>
        <position position="175"/>
    </location>
</feature>
<feature type="sequence conflict" description="In Ref. 4; BAB30514." evidence="5" ref="4">
    <original>L</original>
    <variation>P</variation>
    <location>
        <position position="192"/>
    </location>
</feature>
<feature type="sequence conflict" description="In Ref. 4; BAB30514." evidence="5" ref="4">
    <original>H</original>
    <variation>P</variation>
    <location>
        <position position="408"/>
    </location>
</feature>
<feature type="sequence conflict" description="In Ref. 4; BAB30514." evidence="5" ref="4">
    <original>I</original>
    <variation>T</variation>
    <location>
        <position position="585"/>
    </location>
</feature>
<accession>Q6A000</accession>
<accession>Q80XQ5</accession>
<accession>Q9CUC0</accession>
<comment type="function">
    <text evidence="1">Involved in centriole duplication. Positively regulates CEP63 centrosomal localization. Required for WDR62 centrosomal localization and promotes the centrosomal localization of CDK2. May play a role in cilium assembly.</text>
</comment>
<comment type="subunit">
    <text evidence="1 4">Interacts with CEP63 and WDR62 (By similarity). Forms a complex with OFD1 and CEP20/FOR20 (PubMed:26643951). Interacts with PCM1 (PubMed:26643951).</text>
</comment>
<comment type="subcellular location">
    <subcellularLocation>
        <location evidence="1">Cytoplasm</location>
        <location evidence="1">Cytoskeleton</location>
        <location evidence="1">Microtubule organizing center</location>
        <location evidence="1">Centrosome</location>
        <location evidence="1">Centriolar satellite</location>
    </subcellularLocation>
</comment>
<comment type="sequence caution" evidence="5">
    <conflict type="erroneous initiation">
        <sequence resource="EMBL-CDS" id="BAD32296"/>
    </conflict>
    <text>Extended N-terminus.</text>
</comment>
<organism>
    <name type="scientific">Mus musculus</name>
    <name type="common">Mouse</name>
    <dbReference type="NCBI Taxonomy" id="10090"/>
    <lineage>
        <taxon>Eukaryota</taxon>
        <taxon>Metazoa</taxon>
        <taxon>Chordata</taxon>
        <taxon>Craniata</taxon>
        <taxon>Vertebrata</taxon>
        <taxon>Euteleostomi</taxon>
        <taxon>Mammalia</taxon>
        <taxon>Eutheria</taxon>
        <taxon>Euarchontoglires</taxon>
        <taxon>Glires</taxon>
        <taxon>Rodentia</taxon>
        <taxon>Myomorpha</taxon>
        <taxon>Muroidea</taxon>
        <taxon>Muridae</taxon>
        <taxon>Murinae</taxon>
        <taxon>Mus</taxon>
        <taxon>Mus</taxon>
    </lineage>
</organism>
<evidence type="ECO:0000250" key="1">
    <source>
        <dbReference type="UniProtKB" id="Q2KHM9"/>
    </source>
</evidence>
<evidence type="ECO:0000255" key="2"/>
<evidence type="ECO:0000256" key="3">
    <source>
        <dbReference type="SAM" id="MobiDB-lite"/>
    </source>
</evidence>
<evidence type="ECO:0000269" key="4">
    <source>
    </source>
</evidence>
<evidence type="ECO:0000305" key="5"/>